<keyword id="KW-1185">Reference proteome</keyword>
<organism>
    <name type="scientific">Rhodopseudomonas palustris (strain HaA2)</name>
    <dbReference type="NCBI Taxonomy" id="316058"/>
    <lineage>
        <taxon>Bacteria</taxon>
        <taxon>Pseudomonadati</taxon>
        <taxon>Pseudomonadota</taxon>
        <taxon>Alphaproteobacteria</taxon>
        <taxon>Hyphomicrobiales</taxon>
        <taxon>Nitrobacteraceae</taxon>
        <taxon>Rhodopseudomonas</taxon>
    </lineage>
</organism>
<name>Y294_RHOP2</name>
<proteinExistence type="inferred from homology"/>
<feature type="chain" id="PRO_0000291155" description="UPF0434 protein RPB_0294">
    <location>
        <begin position="1"/>
        <end position="65"/>
    </location>
</feature>
<dbReference type="EMBL" id="CP000250">
    <property type="protein sequence ID" value="ABD05005.1"/>
    <property type="molecule type" value="Genomic_DNA"/>
</dbReference>
<dbReference type="RefSeq" id="WP_011439195.1">
    <property type="nucleotide sequence ID" value="NC_007778.1"/>
</dbReference>
<dbReference type="SMR" id="Q2J3F5"/>
<dbReference type="STRING" id="316058.RPB_0294"/>
<dbReference type="KEGG" id="rpb:RPB_0294"/>
<dbReference type="eggNOG" id="COG2835">
    <property type="taxonomic scope" value="Bacteria"/>
</dbReference>
<dbReference type="HOGENOM" id="CLU_155659_2_2_5"/>
<dbReference type="OrthoDB" id="9812205at2"/>
<dbReference type="Proteomes" id="UP000008809">
    <property type="component" value="Chromosome"/>
</dbReference>
<dbReference type="GO" id="GO:0005829">
    <property type="term" value="C:cytosol"/>
    <property type="evidence" value="ECO:0007669"/>
    <property type="project" value="TreeGrafter"/>
</dbReference>
<dbReference type="FunFam" id="2.20.25.10:FF:000002">
    <property type="entry name" value="UPF0434 protein YcaR"/>
    <property type="match status" value="1"/>
</dbReference>
<dbReference type="Gene3D" id="2.20.25.10">
    <property type="match status" value="1"/>
</dbReference>
<dbReference type="HAMAP" id="MF_01187">
    <property type="entry name" value="UPF0434"/>
    <property type="match status" value="1"/>
</dbReference>
<dbReference type="InterPro" id="IPR005651">
    <property type="entry name" value="Trm112-like"/>
</dbReference>
<dbReference type="PANTHER" id="PTHR33505:SF4">
    <property type="entry name" value="PROTEIN PREY, MITOCHONDRIAL"/>
    <property type="match status" value="1"/>
</dbReference>
<dbReference type="PANTHER" id="PTHR33505">
    <property type="entry name" value="ZGC:162634"/>
    <property type="match status" value="1"/>
</dbReference>
<dbReference type="Pfam" id="PF03966">
    <property type="entry name" value="Trm112p"/>
    <property type="match status" value="1"/>
</dbReference>
<dbReference type="SUPFAM" id="SSF158997">
    <property type="entry name" value="Trm112p-like"/>
    <property type="match status" value="1"/>
</dbReference>
<evidence type="ECO:0000255" key="1">
    <source>
        <dbReference type="HAMAP-Rule" id="MF_01187"/>
    </source>
</evidence>
<sequence length="65" mass="7229">MTTPPERPETSVDRKLLEILVCPVTKGPLEFDAARQELISRGAKLAYPIRDGIPIMLPEEARKLG</sequence>
<comment type="similarity">
    <text evidence="1">Belongs to the UPF0434 family.</text>
</comment>
<gene>
    <name type="ordered locus">RPB_0294</name>
</gene>
<accession>Q2J3F5</accession>
<protein>
    <recommendedName>
        <fullName evidence="1">UPF0434 protein RPB_0294</fullName>
    </recommendedName>
</protein>
<reference key="1">
    <citation type="submission" date="2006-01" db="EMBL/GenBank/DDBJ databases">
        <title>Complete sequence of Rhodopseudomonas palustris HaA2.</title>
        <authorList>
            <consortium name="US DOE Joint Genome Institute"/>
            <person name="Copeland A."/>
            <person name="Lucas S."/>
            <person name="Lapidus A."/>
            <person name="Barry K."/>
            <person name="Detter J.C."/>
            <person name="Glavina T."/>
            <person name="Hammon N."/>
            <person name="Israni S."/>
            <person name="Pitluck S."/>
            <person name="Chain P."/>
            <person name="Malfatti S."/>
            <person name="Shin M."/>
            <person name="Vergez L."/>
            <person name="Schmutz J."/>
            <person name="Larimer F."/>
            <person name="Land M."/>
            <person name="Hauser L."/>
            <person name="Pelletier D.A."/>
            <person name="Kyrpides N."/>
            <person name="Anderson I."/>
            <person name="Oda Y."/>
            <person name="Harwood C.S."/>
            <person name="Richardson P."/>
        </authorList>
    </citation>
    <scope>NUCLEOTIDE SEQUENCE [LARGE SCALE GENOMIC DNA]</scope>
    <source>
        <strain>HaA2</strain>
    </source>
</reference>